<feature type="chain" id="PRO_0000068405" description="Protein SopA">
    <location>
        <begin position="1"/>
        <end position="388"/>
    </location>
</feature>
<geneLocation type="plasmid">
    <name>F</name>
</geneLocation>
<organism>
    <name type="scientific">Escherichia coli (strain K12)</name>
    <dbReference type="NCBI Taxonomy" id="83333"/>
    <lineage>
        <taxon>Bacteria</taxon>
        <taxon>Pseudomonadati</taxon>
        <taxon>Pseudomonadota</taxon>
        <taxon>Gammaproteobacteria</taxon>
        <taxon>Enterobacterales</taxon>
        <taxon>Enterobacteriaceae</taxon>
        <taxon>Escherichia</taxon>
    </lineage>
</organism>
<keyword id="KW-0614">Plasmid</keyword>
<keyword id="KW-0616">Plasmid partition</keyword>
<evidence type="ECO:0000305" key="1"/>
<accession>P62556</accession>
<accession>O82893</accession>
<accession>P08866</accession>
<reference key="1">
    <citation type="journal article" date="1986" name="J. Mol. Biol.">
        <title>Structure and function of the F plasmid genes essential for partitioning.</title>
        <authorList>
            <person name="Mori H."/>
            <person name="Kondo A."/>
            <person name="Ohshima A."/>
            <person name="Ogura T."/>
            <person name="Hiraga S."/>
        </authorList>
    </citation>
    <scope>NUCLEOTIDE SEQUENCE [GENOMIC DNA]</scope>
    <source>
        <strain>K12</strain>
    </source>
</reference>
<reference key="2">
    <citation type="submission" date="1986-08" db="EMBL/GenBank/DDBJ databases">
        <title>F plasmid DNA complete mini-F region (F coordinates 40.301F to 49.869F).</title>
        <authorList>
            <person name="Eichenlaub R."/>
        </authorList>
    </citation>
    <scope>NUCLEOTIDE SEQUENCE [GENOMIC DNA]</scope>
</reference>
<reference key="3">
    <citation type="submission" date="2000-04" db="EMBL/GenBank/DDBJ databases">
        <title>Complete nucleotide sequence of the F plasmid: its implications for organization and diversification of plasmid genomes.</title>
        <authorList>
            <person name="Shimizu H."/>
            <person name="Saitoh Y."/>
            <person name="Suda Y."/>
            <person name="Uehara K."/>
            <person name="Sampei G."/>
            <person name="Mizobuchi K."/>
        </authorList>
    </citation>
    <scope>NUCLEOTIDE SEQUENCE [LARGE SCALE GENOMIC DNA]</scope>
    <source>
        <strain>K12 / CR63</strain>
    </source>
</reference>
<proteinExistence type="inferred from homology"/>
<dbReference type="EMBL" id="X04619">
    <property type="protein sequence ID" value="CAA28295.1"/>
    <property type="molecule type" value="Genomic_DNA"/>
</dbReference>
<dbReference type="EMBL" id="M12987">
    <property type="protein sequence ID" value="AAA24902.1"/>
    <property type="status" value="ALT_INIT"/>
    <property type="molecule type" value="Genomic_DNA"/>
</dbReference>
<dbReference type="EMBL" id="AP001918">
    <property type="protein sequence ID" value="BAA97916.1"/>
    <property type="status" value="ALT_INIT"/>
    <property type="molecule type" value="Genomic_DNA"/>
</dbReference>
<dbReference type="PIR" id="A25783">
    <property type="entry name" value="BVECAF"/>
</dbReference>
<dbReference type="PIR" id="T00243">
    <property type="entry name" value="T00243"/>
</dbReference>
<dbReference type="RefSeq" id="NP_061425.3">
    <property type="nucleotide sequence ID" value="NC_002483.1"/>
</dbReference>
<dbReference type="RefSeq" id="WP_000772446.1">
    <property type="nucleotide sequence ID" value="NZ_STEB01000056.1"/>
</dbReference>
<dbReference type="SMR" id="P62556"/>
<dbReference type="KEGG" id="ecoc:C3026_24340"/>
<dbReference type="PRO" id="PR:P62556"/>
<dbReference type="GO" id="GO:0030541">
    <property type="term" value="P:plasmid partitioning"/>
    <property type="evidence" value="ECO:0007669"/>
    <property type="project" value="UniProtKB-KW"/>
</dbReference>
<dbReference type="CDD" id="cd02042">
    <property type="entry name" value="ParAB_family"/>
    <property type="match status" value="1"/>
</dbReference>
<dbReference type="Gene3D" id="3.40.50.300">
    <property type="entry name" value="P-loop containing nucleotide triphosphate hydrolases"/>
    <property type="match status" value="1"/>
</dbReference>
<dbReference type="InterPro" id="IPR025669">
    <property type="entry name" value="AAA_dom"/>
</dbReference>
<dbReference type="InterPro" id="IPR050678">
    <property type="entry name" value="DNA_Partitioning_ATPase"/>
</dbReference>
<dbReference type="InterPro" id="IPR027417">
    <property type="entry name" value="P-loop_NTPase"/>
</dbReference>
<dbReference type="NCBIfam" id="NF010259">
    <property type="entry name" value="PRK13705.1"/>
    <property type="match status" value="1"/>
</dbReference>
<dbReference type="PANTHER" id="PTHR13696">
    <property type="entry name" value="P-LOOP CONTAINING NUCLEOSIDE TRIPHOSPHATE HYDROLASE"/>
    <property type="match status" value="1"/>
</dbReference>
<dbReference type="PANTHER" id="PTHR13696:SF52">
    <property type="entry name" value="PARA FAMILY PROTEIN CT_582"/>
    <property type="match status" value="1"/>
</dbReference>
<dbReference type="Pfam" id="PF13614">
    <property type="entry name" value="AAA_31"/>
    <property type="match status" value="1"/>
</dbReference>
<dbReference type="SUPFAM" id="SSF52540">
    <property type="entry name" value="P-loop containing nucleoside triphosphate hydrolases"/>
    <property type="match status" value="1"/>
</dbReference>
<comment type="function">
    <text>This protein is essential for plasmid partition. It ensures the proper distribution of newly replicated plasmids to daughter cells during cell division. SopA is trans-acting.</text>
</comment>
<comment type="similarity">
    <text evidence="1">Belongs to the ParA family.</text>
</comment>
<comment type="sequence caution" evidence="1">
    <conflict type="erroneous initiation">
        <sequence resource="EMBL-CDS" id="AAA24902"/>
    </conflict>
</comment>
<comment type="sequence caution" evidence="1">
    <conflict type="erroneous initiation">
        <sequence resource="EMBL-CDS" id="BAA97916"/>
    </conflict>
</comment>
<sequence length="388" mass="43660">MKLMETLNQCINAGHEMTKAIAIAQFNDDSPEARKITRRWRIGEAADLVGVSSQAIRDAEKAGRLPHPDMEIRGRVEQRVGYTIEQINHMRDVFGTRLRRAEDVFPPVIGVAAHKGGVYKTSVSVHLAQDLALKGLRVLLVEGNDPQGTASMYHGWVPDLHIHAEDTLLPFYLGEKDDVTYAIKPTCWPGLDIIPSCLALHRIETELMGKFDEGKLPTDPHLMLRLAIETVAHDYDVIVIDSAPNLGIGTINVVCAADVLIVPTPAELFDYTSALQFFDMLRDLLKNVDLKGFEPDVRILLTKYSNSNGSQSPWMEEQIRDAWGSMVLKNVVRETDEVGKGQIRMRTVFEQAIDQRSSTGAWRNALSIWEPVCNEIFDRLIKPRWEIR</sequence>
<gene>
    <name type="primary">sopA</name>
    <name type="synonym">A</name>
    <name type="ordered locus">ECOK12F046</name>
</gene>
<protein>
    <recommendedName>
        <fullName>Protein SopA</fullName>
    </recommendedName>
    <alternativeName>
        <fullName>Plasmid partition protein A</fullName>
    </alternativeName>
</protein>
<name>SOPA_ECOLI</name>